<proteinExistence type="inferred from homology"/>
<organism>
    <name type="scientific">Salmonella arizonae (strain ATCC BAA-731 / CDC346-86 / RSK2980)</name>
    <dbReference type="NCBI Taxonomy" id="41514"/>
    <lineage>
        <taxon>Bacteria</taxon>
        <taxon>Pseudomonadati</taxon>
        <taxon>Pseudomonadota</taxon>
        <taxon>Gammaproteobacteria</taxon>
        <taxon>Enterobacterales</taxon>
        <taxon>Enterobacteriaceae</taxon>
        <taxon>Salmonella</taxon>
    </lineage>
</organism>
<accession>A9MPI1</accession>
<protein>
    <recommendedName>
        <fullName evidence="1">3-hydroxyacyl-[acyl-carrier-protein] dehydratase FabZ</fullName>
        <ecNumber evidence="1">4.2.1.59</ecNumber>
    </recommendedName>
    <alternativeName>
        <fullName evidence="1">(3R)-hydroxymyristoyl-[acyl-carrier-protein] dehydratase</fullName>
        <shortName evidence="1">(3R)-hydroxymyristoyl-ACP dehydrase</shortName>
    </alternativeName>
    <alternativeName>
        <fullName evidence="1">Beta-hydroxyacyl-ACP dehydratase</fullName>
    </alternativeName>
</protein>
<keyword id="KW-0963">Cytoplasm</keyword>
<keyword id="KW-0441">Lipid A biosynthesis</keyword>
<keyword id="KW-0444">Lipid biosynthesis</keyword>
<keyword id="KW-0443">Lipid metabolism</keyword>
<keyword id="KW-0456">Lyase</keyword>
<keyword id="KW-1185">Reference proteome</keyword>
<comment type="function">
    <text evidence="1">Involved in unsaturated fatty acids biosynthesis. Catalyzes the dehydration of short chain beta-hydroxyacyl-ACPs and long chain saturated and unsaturated beta-hydroxyacyl-ACPs.</text>
</comment>
<comment type="catalytic activity">
    <reaction evidence="1">
        <text>a (3R)-hydroxyacyl-[ACP] = a (2E)-enoyl-[ACP] + H2O</text>
        <dbReference type="Rhea" id="RHEA:13097"/>
        <dbReference type="Rhea" id="RHEA-COMP:9925"/>
        <dbReference type="Rhea" id="RHEA-COMP:9945"/>
        <dbReference type="ChEBI" id="CHEBI:15377"/>
        <dbReference type="ChEBI" id="CHEBI:78784"/>
        <dbReference type="ChEBI" id="CHEBI:78827"/>
        <dbReference type="EC" id="4.2.1.59"/>
    </reaction>
</comment>
<comment type="subcellular location">
    <subcellularLocation>
        <location evidence="1">Cytoplasm</location>
    </subcellularLocation>
</comment>
<comment type="similarity">
    <text evidence="1">Belongs to the thioester dehydratase family. FabZ subfamily.</text>
</comment>
<evidence type="ECO:0000255" key="1">
    <source>
        <dbReference type="HAMAP-Rule" id="MF_00406"/>
    </source>
</evidence>
<reference key="1">
    <citation type="submission" date="2007-11" db="EMBL/GenBank/DDBJ databases">
        <authorList>
            <consortium name="The Salmonella enterica serovar Arizonae Genome Sequencing Project"/>
            <person name="McClelland M."/>
            <person name="Sanderson E.K."/>
            <person name="Porwollik S."/>
            <person name="Spieth J."/>
            <person name="Clifton W.S."/>
            <person name="Fulton R."/>
            <person name="Chunyan W."/>
            <person name="Wollam A."/>
            <person name="Shah N."/>
            <person name="Pepin K."/>
            <person name="Bhonagiri V."/>
            <person name="Nash W."/>
            <person name="Johnson M."/>
            <person name="Thiruvilangam P."/>
            <person name="Wilson R."/>
        </authorList>
    </citation>
    <scope>NUCLEOTIDE SEQUENCE [LARGE SCALE GENOMIC DNA]</scope>
    <source>
        <strain>ATCC BAA-731 / CDC346-86 / RSK2980</strain>
    </source>
</reference>
<dbReference type="EC" id="4.2.1.59" evidence="1"/>
<dbReference type="EMBL" id="CP000880">
    <property type="protein sequence ID" value="ABX22624.1"/>
    <property type="molecule type" value="Genomic_DNA"/>
</dbReference>
<dbReference type="SMR" id="A9MPI1"/>
<dbReference type="STRING" id="41514.SARI_02775"/>
<dbReference type="KEGG" id="ses:SARI_02775"/>
<dbReference type="HOGENOM" id="CLU_078912_1_0_6"/>
<dbReference type="Proteomes" id="UP000002084">
    <property type="component" value="Chromosome"/>
</dbReference>
<dbReference type="GO" id="GO:0005737">
    <property type="term" value="C:cytoplasm"/>
    <property type="evidence" value="ECO:0007669"/>
    <property type="project" value="UniProtKB-SubCell"/>
</dbReference>
<dbReference type="GO" id="GO:0016020">
    <property type="term" value="C:membrane"/>
    <property type="evidence" value="ECO:0007669"/>
    <property type="project" value="GOC"/>
</dbReference>
<dbReference type="GO" id="GO:0019171">
    <property type="term" value="F:(3R)-hydroxyacyl-[acyl-carrier-protein] dehydratase activity"/>
    <property type="evidence" value="ECO:0007669"/>
    <property type="project" value="UniProtKB-EC"/>
</dbReference>
<dbReference type="GO" id="GO:0006633">
    <property type="term" value="P:fatty acid biosynthetic process"/>
    <property type="evidence" value="ECO:0007669"/>
    <property type="project" value="UniProtKB-UniRule"/>
</dbReference>
<dbReference type="GO" id="GO:0009245">
    <property type="term" value="P:lipid A biosynthetic process"/>
    <property type="evidence" value="ECO:0007669"/>
    <property type="project" value="UniProtKB-UniRule"/>
</dbReference>
<dbReference type="CDD" id="cd01288">
    <property type="entry name" value="FabZ"/>
    <property type="match status" value="1"/>
</dbReference>
<dbReference type="FunFam" id="3.10.129.10:FF:000001">
    <property type="entry name" value="3-hydroxyacyl-[acyl-carrier-protein] dehydratase FabZ"/>
    <property type="match status" value="1"/>
</dbReference>
<dbReference type="Gene3D" id="3.10.129.10">
    <property type="entry name" value="Hotdog Thioesterase"/>
    <property type="match status" value="1"/>
</dbReference>
<dbReference type="HAMAP" id="MF_00406">
    <property type="entry name" value="FabZ"/>
    <property type="match status" value="1"/>
</dbReference>
<dbReference type="InterPro" id="IPR013114">
    <property type="entry name" value="FabA_FabZ"/>
</dbReference>
<dbReference type="InterPro" id="IPR010084">
    <property type="entry name" value="FabZ"/>
</dbReference>
<dbReference type="InterPro" id="IPR029069">
    <property type="entry name" value="HotDog_dom_sf"/>
</dbReference>
<dbReference type="NCBIfam" id="TIGR01750">
    <property type="entry name" value="fabZ"/>
    <property type="match status" value="1"/>
</dbReference>
<dbReference type="NCBIfam" id="NF000582">
    <property type="entry name" value="PRK00006.1"/>
    <property type="match status" value="1"/>
</dbReference>
<dbReference type="PANTHER" id="PTHR30272">
    <property type="entry name" value="3-HYDROXYACYL-[ACYL-CARRIER-PROTEIN] DEHYDRATASE"/>
    <property type="match status" value="1"/>
</dbReference>
<dbReference type="PANTHER" id="PTHR30272:SF1">
    <property type="entry name" value="3-HYDROXYACYL-[ACYL-CARRIER-PROTEIN] DEHYDRATASE"/>
    <property type="match status" value="1"/>
</dbReference>
<dbReference type="Pfam" id="PF07977">
    <property type="entry name" value="FabA"/>
    <property type="match status" value="1"/>
</dbReference>
<dbReference type="SUPFAM" id="SSF54637">
    <property type="entry name" value="Thioesterase/thiol ester dehydrase-isomerase"/>
    <property type="match status" value="1"/>
</dbReference>
<sequence>MTTNTHTLQIEEILELLPHRFPFLLVDRVLDFEEGRFLRAVKNVSVNEPFFQGHFPGKPILPGVLILEAMAQATGILAFKSVGKLEPGELYYFAGIDEARFKRPVVPGDQMIMEVTFEKTRRGLTRFKGVALVDGKVVCEATMMCARSREA</sequence>
<name>FABZ_SALAR</name>
<feature type="chain" id="PRO_1000080447" description="3-hydroxyacyl-[acyl-carrier-protein] dehydratase FabZ">
    <location>
        <begin position="1"/>
        <end position="151"/>
    </location>
</feature>
<feature type="active site" evidence="1">
    <location>
        <position position="54"/>
    </location>
</feature>
<gene>
    <name evidence="1" type="primary">fabZ</name>
    <name type="ordered locus">SARI_02775</name>
</gene>